<reference key="1">
    <citation type="journal article" date="1998" name="Science">
        <title>Genome sequence of the nematode C. elegans: a platform for investigating biology.</title>
        <authorList>
            <consortium name="The C. elegans sequencing consortium"/>
        </authorList>
    </citation>
    <scope>NUCLEOTIDE SEQUENCE [LARGE SCALE GENOMIC DNA]</scope>
    <source>
        <strain>Bristol N2</strain>
    </source>
</reference>
<protein>
    <recommendedName>
        <fullName>L-2-hydroxyglutarate dehydrogenase, mitochondrial</fullName>
        <ecNumber>1.1.99.2</ecNumber>
    </recommendedName>
</protein>
<sequence>MLNRGTFQVFRGISGPPKKSVDLPKYDLVIVGGGIVGCATARQLLIEKPQLKVALIEKEKELAVHQSGHNSGVIHAGIYYTPGSLKAKLCVEGLDLSYEFFDKEKVPYKKTGKLIVAVEPEEVPRLDALFSRAQTNGCRDIEMIDSSKITELEPHCRGLKALWSPHTGIVDWGYVTKRFGEDFEKRGGKIYTSYPLEKISDNHDPGYPIRVSSGPALAEFETKNLITCAGLQSDRVAALSGCSTDPKIVPFRGEYLLLKPEKRHLVKTNIYPVPDPRFPFLGVHFTPRMNGDIWLGPNAVLAYKREGYSYFSISPSDLLESLSYSGMQKLVKKHFTFGIKELYRGVWIAAQVKQLQRFIPELKLSDVTRGPAGVRAQAMDSAGNLVDDFVFDSGTGKLSPLLMHVRNAPSPAATSSLAIAKMITSEAINRFKL</sequence>
<accession>Q9N4Z0</accession>
<keyword id="KW-0274">FAD</keyword>
<keyword id="KW-0285">Flavoprotein</keyword>
<keyword id="KW-0496">Mitochondrion</keyword>
<keyword id="KW-0560">Oxidoreductase</keyword>
<keyword id="KW-1185">Reference proteome</keyword>
<keyword id="KW-0809">Transit peptide</keyword>
<feature type="transit peptide" description="Mitochondrion" evidence="2">
    <location>
        <begin position="1"/>
        <end status="unknown"/>
    </location>
</feature>
<feature type="chain" id="PRO_0000331211" description="L-2-hydroxyglutarate dehydrogenase, mitochondrial">
    <location>
        <begin status="unknown"/>
        <end position="433"/>
    </location>
</feature>
<dbReference type="EC" id="1.1.99.2"/>
<dbReference type="EMBL" id="FO080651">
    <property type="protein sequence ID" value="CCD65497.1"/>
    <property type="molecule type" value="Genomic_DNA"/>
</dbReference>
<dbReference type="RefSeq" id="NP_503730.1">
    <property type="nucleotide sequence ID" value="NM_071329.7"/>
</dbReference>
<dbReference type="SMR" id="Q9N4Z0"/>
<dbReference type="BioGRID" id="43790">
    <property type="interactions" value="3"/>
</dbReference>
<dbReference type="FunCoup" id="Q9N4Z0">
    <property type="interactions" value="2370"/>
</dbReference>
<dbReference type="STRING" id="6239.Y45G12B.3a.2"/>
<dbReference type="PaxDb" id="6239-Y45G12B.3"/>
<dbReference type="PeptideAtlas" id="Q9N4Z0"/>
<dbReference type="EnsemblMetazoa" id="Y45G12B.3a.1">
    <property type="protein sequence ID" value="Y45G12B.3a.1"/>
    <property type="gene ID" value="WBGene00021564"/>
</dbReference>
<dbReference type="EnsemblMetazoa" id="Y45G12B.3a.2">
    <property type="protein sequence ID" value="Y45G12B.3a.2"/>
    <property type="gene ID" value="WBGene00021564"/>
</dbReference>
<dbReference type="GeneID" id="178733"/>
<dbReference type="KEGG" id="cel:CELE_Y45G12B.3"/>
<dbReference type="UCSC" id="Y45G12B.3">
    <property type="organism name" value="c. elegans"/>
</dbReference>
<dbReference type="AGR" id="WB:WBGene00021564"/>
<dbReference type="CTD" id="178733"/>
<dbReference type="WormBase" id="Y45G12B.3a">
    <property type="protein sequence ID" value="CE28366"/>
    <property type="gene ID" value="WBGene00021564"/>
</dbReference>
<dbReference type="eggNOG" id="KOG2665">
    <property type="taxonomic scope" value="Eukaryota"/>
</dbReference>
<dbReference type="GeneTree" id="ENSGT00490000043421"/>
<dbReference type="HOGENOM" id="CLU_024775_0_0_1"/>
<dbReference type="InParanoid" id="Q9N4Z0"/>
<dbReference type="OMA" id="GVHFTRM"/>
<dbReference type="OrthoDB" id="498204at2759"/>
<dbReference type="PhylomeDB" id="Q9N4Z0"/>
<dbReference type="Reactome" id="R-CEL-880009">
    <property type="pathway name" value="Interconversion of 2-oxoglutarate and 2-hydroxyglutarate"/>
</dbReference>
<dbReference type="PRO" id="PR:Q9N4Z0"/>
<dbReference type="Proteomes" id="UP000001940">
    <property type="component" value="Chromosome V"/>
</dbReference>
<dbReference type="Bgee" id="WBGene00021564">
    <property type="expression patterns" value="Expressed in adult organism and 4 other cell types or tissues"/>
</dbReference>
<dbReference type="ExpressionAtlas" id="Q9N4Z0">
    <property type="expression patterns" value="baseline and differential"/>
</dbReference>
<dbReference type="GO" id="GO:0005739">
    <property type="term" value="C:mitochondrion"/>
    <property type="evidence" value="ECO:0007669"/>
    <property type="project" value="UniProtKB-SubCell"/>
</dbReference>
<dbReference type="GO" id="GO:0047545">
    <property type="term" value="F:2-hydroxyglutarate dehydrogenase activity"/>
    <property type="evidence" value="ECO:0000318"/>
    <property type="project" value="GO_Central"/>
</dbReference>
<dbReference type="Gene3D" id="3.30.9.10">
    <property type="entry name" value="D-Amino Acid Oxidase, subunit A, domain 2"/>
    <property type="match status" value="1"/>
</dbReference>
<dbReference type="Gene3D" id="3.50.50.60">
    <property type="entry name" value="FAD/NAD(P)-binding domain"/>
    <property type="match status" value="1"/>
</dbReference>
<dbReference type="InterPro" id="IPR006076">
    <property type="entry name" value="FAD-dep_OxRdtase"/>
</dbReference>
<dbReference type="InterPro" id="IPR036188">
    <property type="entry name" value="FAD/NAD-bd_sf"/>
</dbReference>
<dbReference type="NCBIfam" id="NF008726">
    <property type="entry name" value="PRK11728.1"/>
    <property type="match status" value="1"/>
</dbReference>
<dbReference type="PANTHER" id="PTHR43104">
    <property type="entry name" value="L-2-HYDROXYGLUTARATE DEHYDROGENASE, MITOCHONDRIAL"/>
    <property type="match status" value="1"/>
</dbReference>
<dbReference type="PANTHER" id="PTHR43104:SF2">
    <property type="entry name" value="L-2-HYDROXYGLUTARATE DEHYDROGENASE, MITOCHONDRIAL"/>
    <property type="match status" value="1"/>
</dbReference>
<dbReference type="Pfam" id="PF01266">
    <property type="entry name" value="DAO"/>
    <property type="match status" value="1"/>
</dbReference>
<dbReference type="SUPFAM" id="SSF51905">
    <property type="entry name" value="FAD/NAD(P)-binding domain"/>
    <property type="match status" value="1"/>
</dbReference>
<evidence type="ECO:0000250" key="1"/>
<evidence type="ECO:0000255" key="2"/>
<evidence type="ECO:0000305" key="3"/>
<name>L2HDH_CAEEL</name>
<organism>
    <name type="scientific">Caenorhabditis elegans</name>
    <dbReference type="NCBI Taxonomy" id="6239"/>
    <lineage>
        <taxon>Eukaryota</taxon>
        <taxon>Metazoa</taxon>
        <taxon>Ecdysozoa</taxon>
        <taxon>Nematoda</taxon>
        <taxon>Chromadorea</taxon>
        <taxon>Rhabditida</taxon>
        <taxon>Rhabditina</taxon>
        <taxon>Rhabditomorpha</taxon>
        <taxon>Rhabditoidea</taxon>
        <taxon>Rhabditidae</taxon>
        <taxon>Peloderinae</taxon>
        <taxon>Caenorhabditis</taxon>
    </lineage>
</organism>
<comment type="catalytic activity">
    <reaction>
        <text>(S)-2-hydroxyglutarate + A = 2-oxoglutarate + AH2</text>
        <dbReference type="Rhea" id="RHEA:21252"/>
        <dbReference type="ChEBI" id="CHEBI:13193"/>
        <dbReference type="ChEBI" id="CHEBI:16782"/>
        <dbReference type="ChEBI" id="CHEBI:16810"/>
        <dbReference type="ChEBI" id="CHEBI:17499"/>
        <dbReference type="EC" id="1.1.99.2"/>
    </reaction>
</comment>
<comment type="cofactor">
    <cofactor evidence="1">
        <name>FAD</name>
        <dbReference type="ChEBI" id="CHEBI:57692"/>
    </cofactor>
</comment>
<comment type="subcellular location">
    <subcellularLocation>
        <location evidence="1">Mitochondrion</location>
    </subcellularLocation>
</comment>
<comment type="similarity">
    <text evidence="3">Belongs to the L2HGDH family.</text>
</comment>
<proteinExistence type="inferred from homology"/>
<gene>
    <name type="ORF">Y45G12B.3</name>
</gene>